<dbReference type="EMBL" id="CP000469">
    <property type="protein sequence ID" value="ABK49042.1"/>
    <property type="molecule type" value="Genomic_DNA"/>
</dbReference>
<dbReference type="RefSeq" id="WP_011071784.1">
    <property type="nucleotide sequence ID" value="NC_008577.1"/>
</dbReference>
<dbReference type="SMR" id="A0KZ23"/>
<dbReference type="STRING" id="94122.Shewana3_2815"/>
<dbReference type="GeneID" id="94728753"/>
<dbReference type="KEGG" id="shn:Shewana3_2815"/>
<dbReference type="eggNOG" id="COG0052">
    <property type="taxonomic scope" value="Bacteria"/>
</dbReference>
<dbReference type="HOGENOM" id="CLU_040318_1_2_6"/>
<dbReference type="OrthoDB" id="9808036at2"/>
<dbReference type="Proteomes" id="UP000002589">
    <property type="component" value="Chromosome"/>
</dbReference>
<dbReference type="GO" id="GO:0022627">
    <property type="term" value="C:cytosolic small ribosomal subunit"/>
    <property type="evidence" value="ECO:0007669"/>
    <property type="project" value="TreeGrafter"/>
</dbReference>
<dbReference type="GO" id="GO:0003735">
    <property type="term" value="F:structural constituent of ribosome"/>
    <property type="evidence" value="ECO:0007669"/>
    <property type="project" value="InterPro"/>
</dbReference>
<dbReference type="GO" id="GO:0006412">
    <property type="term" value="P:translation"/>
    <property type="evidence" value="ECO:0007669"/>
    <property type="project" value="UniProtKB-UniRule"/>
</dbReference>
<dbReference type="CDD" id="cd01425">
    <property type="entry name" value="RPS2"/>
    <property type="match status" value="1"/>
</dbReference>
<dbReference type="FunFam" id="1.10.287.610:FF:000001">
    <property type="entry name" value="30S ribosomal protein S2"/>
    <property type="match status" value="1"/>
</dbReference>
<dbReference type="Gene3D" id="3.40.50.10490">
    <property type="entry name" value="Glucose-6-phosphate isomerase like protein, domain 1"/>
    <property type="match status" value="1"/>
</dbReference>
<dbReference type="Gene3D" id="1.10.287.610">
    <property type="entry name" value="Helix hairpin bin"/>
    <property type="match status" value="1"/>
</dbReference>
<dbReference type="HAMAP" id="MF_00291_B">
    <property type="entry name" value="Ribosomal_uS2_B"/>
    <property type="match status" value="1"/>
</dbReference>
<dbReference type="InterPro" id="IPR001865">
    <property type="entry name" value="Ribosomal_uS2"/>
</dbReference>
<dbReference type="InterPro" id="IPR005706">
    <property type="entry name" value="Ribosomal_uS2_bac/mit/plastid"/>
</dbReference>
<dbReference type="InterPro" id="IPR018130">
    <property type="entry name" value="Ribosomal_uS2_CS"/>
</dbReference>
<dbReference type="InterPro" id="IPR023591">
    <property type="entry name" value="Ribosomal_uS2_flav_dom_sf"/>
</dbReference>
<dbReference type="NCBIfam" id="TIGR01011">
    <property type="entry name" value="rpsB_bact"/>
    <property type="match status" value="1"/>
</dbReference>
<dbReference type="PANTHER" id="PTHR12534">
    <property type="entry name" value="30S RIBOSOMAL PROTEIN S2 PROKARYOTIC AND ORGANELLAR"/>
    <property type="match status" value="1"/>
</dbReference>
<dbReference type="PANTHER" id="PTHR12534:SF0">
    <property type="entry name" value="SMALL RIBOSOMAL SUBUNIT PROTEIN US2M"/>
    <property type="match status" value="1"/>
</dbReference>
<dbReference type="Pfam" id="PF00318">
    <property type="entry name" value="Ribosomal_S2"/>
    <property type="match status" value="1"/>
</dbReference>
<dbReference type="PRINTS" id="PR00395">
    <property type="entry name" value="RIBOSOMALS2"/>
</dbReference>
<dbReference type="SUPFAM" id="SSF52313">
    <property type="entry name" value="Ribosomal protein S2"/>
    <property type="match status" value="1"/>
</dbReference>
<dbReference type="PROSITE" id="PS00962">
    <property type="entry name" value="RIBOSOMAL_S2_1"/>
    <property type="match status" value="1"/>
</dbReference>
<dbReference type="PROSITE" id="PS00963">
    <property type="entry name" value="RIBOSOMAL_S2_2"/>
    <property type="match status" value="1"/>
</dbReference>
<accession>A0KZ23</accession>
<reference key="1">
    <citation type="submission" date="2006-09" db="EMBL/GenBank/DDBJ databases">
        <title>Complete sequence of chromosome 1 of Shewanella sp. ANA-3.</title>
        <authorList>
            <person name="Copeland A."/>
            <person name="Lucas S."/>
            <person name="Lapidus A."/>
            <person name="Barry K."/>
            <person name="Detter J.C."/>
            <person name="Glavina del Rio T."/>
            <person name="Hammon N."/>
            <person name="Israni S."/>
            <person name="Dalin E."/>
            <person name="Tice H."/>
            <person name="Pitluck S."/>
            <person name="Chertkov O."/>
            <person name="Brettin T."/>
            <person name="Bruce D."/>
            <person name="Han C."/>
            <person name="Tapia R."/>
            <person name="Gilna P."/>
            <person name="Schmutz J."/>
            <person name="Larimer F."/>
            <person name="Land M."/>
            <person name="Hauser L."/>
            <person name="Kyrpides N."/>
            <person name="Kim E."/>
            <person name="Newman D."/>
            <person name="Salticov C."/>
            <person name="Konstantinidis K."/>
            <person name="Klappenback J."/>
            <person name="Tiedje J."/>
            <person name="Richardson P."/>
        </authorList>
    </citation>
    <scope>NUCLEOTIDE SEQUENCE [LARGE SCALE GENOMIC DNA]</scope>
    <source>
        <strain>ANA-3</strain>
    </source>
</reference>
<name>RS2_SHESA</name>
<organism>
    <name type="scientific">Shewanella sp. (strain ANA-3)</name>
    <dbReference type="NCBI Taxonomy" id="94122"/>
    <lineage>
        <taxon>Bacteria</taxon>
        <taxon>Pseudomonadati</taxon>
        <taxon>Pseudomonadota</taxon>
        <taxon>Gammaproteobacteria</taxon>
        <taxon>Alteromonadales</taxon>
        <taxon>Shewanellaceae</taxon>
        <taxon>Shewanella</taxon>
    </lineage>
</organism>
<comment type="similarity">
    <text evidence="1">Belongs to the universal ribosomal protein uS2 family.</text>
</comment>
<gene>
    <name evidence="1" type="primary">rpsB</name>
    <name type="ordered locus">Shewana3_2815</name>
</gene>
<evidence type="ECO:0000255" key="1">
    <source>
        <dbReference type="HAMAP-Rule" id="MF_00291"/>
    </source>
</evidence>
<evidence type="ECO:0000305" key="2"/>
<keyword id="KW-0687">Ribonucleoprotein</keyword>
<keyword id="KW-0689">Ribosomal protein</keyword>
<feature type="chain" id="PRO_1000004067" description="Small ribosomal subunit protein uS2">
    <location>
        <begin position="1"/>
        <end position="242"/>
    </location>
</feature>
<sequence>MTTVSMRDMLQAGVHFGHQTRYWNPKMKPFIFGARNGVHIINLEHTVPMFNEALAFISNVASKKGKVLFVGTKRAAGEAIKEAAISCDQYYVDHRWLGGMLTNWKTVRQSIKRLKELESQSVDGTFDKLTKKEALMRTRELEKLEKSLGGIKNMGGLPDVLFVIGADHEHIAIKEANNLGIPVVAVVDTNSAPDGVNYIVPGNDDAMRAIRLYTTSVAAAANAGRGQDLAVQAEQDGFVEAE</sequence>
<proteinExistence type="inferred from homology"/>
<protein>
    <recommendedName>
        <fullName evidence="1">Small ribosomal subunit protein uS2</fullName>
    </recommendedName>
    <alternativeName>
        <fullName evidence="2">30S ribosomal protein S2</fullName>
    </alternativeName>
</protein>